<accession>O27952</accession>
<gene>
    <name type="ordered locus">AF_2332</name>
</gene>
<name>Y2332_ARCFU</name>
<feature type="chain" id="PRO_0000128138" description="Uncharacterized protein AF_2332">
    <location>
        <begin position="1"/>
        <end position="148"/>
    </location>
</feature>
<reference key="1">
    <citation type="journal article" date="1997" name="Nature">
        <title>The complete genome sequence of the hyperthermophilic, sulphate-reducing archaeon Archaeoglobus fulgidus.</title>
        <authorList>
            <person name="Klenk H.-P."/>
            <person name="Clayton R.A."/>
            <person name="Tomb J.-F."/>
            <person name="White O."/>
            <person name="Nelson K.E."/>
            <person name="Ketchum K.A."/>
            <person name="Dodson R.J."/>
            <person name="Gwinn M.L."/>
            <person name="Hickey E.K."/>
            <person name="Peterson J.D."/>
            <person name="Richardson D.L."/>
            <person name="Kerlavage A.R."/>
            <person name="Graham D.E."/>
            <person name="Kyrpides N.C."/>
            <person name="Fleischmann R.D."/>
            <person name="Quackenbush J."/>
            <person name="Lee N.H."/>
            <person name="Sutton G.G."/>
            <person name="Gill S.R."/>
            <person name="Kirkness E.F."/>
            <person name="Dougherty B.A."/>
            <person name="McKenney K."/>
            <person name="Adams M.D."/>
            <person name="Loftus B.J."/>
            <person name="Peterson S.N."/>
            <person name="Reich C.I."/>
            <person name="McNeil L.K."/>
            <person name="Badger J.H."/>
            <person name="Glodek A."/>
            <person name="Zhou L."/>
            <person name="Overbeek R."/>
            <person name="Gocayne J.D."/>
            <person name="Weidman J.F."/>
            <person name="McDonald L.A."/>
            <person name="Utterback T.R."/>
            <person name="Cotton M.D."/>
            <person name="Spriggs T."/>
            <person name="Artiach P."/>
            <person name="Kaine B.P."/>
            <person name="Sykes S.M."/>
            <person name="Sadow P.W."/>
            <person name="D'Andrea K.P."/>
            <person name="Bowman C."/>
            <person name="Fujii C."/>
            <person name="Garland S.A."/>
            <person name="Mason T.M."/>
            <person name="Olsen G.J."/>
            <person name="Fraser C.M."/>
            <person name="Smith H.O."/>
            <person name="Woese C.R."/>
            <person name="Venter J.C."/>
        </authorList>
    </citation>
    <scope>NUCLEOTIDE SEQUENCE [LARGE SCALE GENOMIC DNA]</scope>
    <source>
        <strain>ATCC 49558 / DSM 4304 / JCM 9628 / NBRC 100126 / VC-16</strain>
    </source>
</reference>
<keyword id="KW-1185">Reference proteome</keyword>
<sequence>MNLYFFTFTGNSRKIAEMVADELAVELREIKSLRLPYIAWLLLSFVPCMAVKIDVQPPTGKEIILCFPKWTFNCPPVTAFLKKFAKGREIRMIICYGGFDERRYAEFYKSFALKCGAKKADYLLVKRRELRENPEKVRDNIKKWLKIS</sequence>
<proteinExistence type="predicted"/>
<organism>
    <name type="scientific">Archaeoglobus fulgidus (strain ATCC 49558 / DSM 4304 / JCM 9628 / NBRC 100126 / VC-16)</name>
    <dbReference type="NCBI Taxonomy" id="224325"/>
    <lineage>
        <taxon>Archaea</taxon>
        <taxon>Methanobacteriati</taxon>
        <taxon>Methanobacteriota</taxon>
        <taxon>Archaeoglobi</taxon>
        <taxon>Archaeoglobales</taxon>
        <taxon>Archaeoglobaceae</taxon>
        <taxon>Archaeoglobus</taxon>
    </lineage>
</organism>
<protein>
    <recommendedName>
        <fullName>Uncharacterized protein AF_2332</fullName>
    </recommendedName>
</protein>
<dbReference type="EMBL" id="AE000782">
    <property type="protein sequence ID" value="AAB88920.1"/>
    <property type="molecule type" value="Genomic_DNA"/>
</dbReference>
<dbReference type="PIR" id="D69541">
    <property type="entry name" value="D69541"/>
</dbReference>
<dbReference type="RefSeq" id="WP_010879821.1">
    <property type="nucleotide sequence ID" value="NC_000917.1"/>
</dbReference>
<dbReference type="SMR" id="O27952"/>
<dbReference type="STRING" id="224325.AF_2332"/>
<dbReference type="PaxDb" id="224325-AF_2332"/>
<dbReference type="EnsemblBacteria" id="AAB88920">
    <property type="protein sequence ID" value="AAB88920"/>
    <property type="gene ID" value="AF_2332"/>
</dbReference>
<dbReference type="KEGG" id="afu:AF_2332"/>
<dbReference type="eggNOG" id="arCOG00519">
    <property type="taxonomic scope" value="Archaea"/>
</dbReference>
<dbReference type="HOGENOM" id="CLU_1824421_0_0_2"/>
<dbReference type="OrthoDB" id="51615at2157"/>
<dbReference type="Proteomes" id="UP000002199">
    <property type="component" value="Chromosome"/>
</dbReference>
<dbReference type="Gene3D" id="3.40.50.360">
    <property type="match status" value="1"/>
</dbReference>
<dbReference type="InterPro" id="IPR029039">
    <property type="entry name" value="Flavoprotein-like_sf"/>
</dbReference>
<dbReference type="SUPFAM" id="SSF52218">
    <property type="entry name" value="Flavoproteins"/>
    <property type="match status" value="1"/>
</dbReference>